<gene>
    <name type="ordered locus">SERP1299</name>
</gene>
<name>Y1299_STAEQ</name>
<dbReference type="EMBL" id="CP000029">
    <property type="protein sequence ID" value="AAW54712.1"/>
    <property type="molecule type" value="Genomic_DNA"/>
</dbReference>
<dbReference type="RefSeq" id="WP_001830868.1">
    <property type="nucleotide sequence ID" value="NC_002976.3"/>
</dbReference>
<dbReference type="SMR" id="Q5HNH0"/>
<dbReference type="STRING" id="176279.SERP1299"/>
<dbReference type="KEGG" id="ser:SERP1299"/>
<dbReference type="eggNOG" id="COG4768">
    <property type="taxonomic scope" value="Bacteria"/>
</dbReference>
<dbReference type="HOGENOM" id="CLU_115870_0_0_9"/>
<dbReference type="Proteomes" id="UP000000531">
    <property type="component" value="Chromosome"/>
</dbReference>
<dbReference type="GO" id="GO:0005886">
    <property type="term" value="C:plasma membrane"/>
    <property type="evidence" value="ECO:0007669"/>
    <property type="project" value="UniProtKB-SubCell"/>
</dbReference>
<dbReference type="Gene3D" id="1.10.287.950">
    <property type="entry name" value="Methyl-accepting chemotaxis protein"/>
    <property type="match status" value="1"/>
</dbReference>
<dbReference type="InterPro" id="IPR009293">
    <property type="entry name" value="UPF0478"/>
</dbReference>
<dbReference type="PANTHER" id="PTHR40070">
    <property type="entry name" value="UPF0478 PROTEIN YTXG"/>
    <property type="match status" value="1"/>
</dbReference>
<dbReference type="PANTHER" id="PTHR40070:SF1">
    <property type="entry name" value="UPF0478 PROTEIN YTXG"/>
    <property type="match status" value="1"/>
</dbReference>
<dbReference type="Pfam" id="PF06103">
    <property type="entry name" value="DUF948"/>
    <property type="match status" value="1"/>
</dbReference>
<dbReference type="SUPFAM" id="SSF58104">
    <property type="entry name" value="Methyl-accepting chemotaxis protein (MCP) signaling domain"/>
    <property type="match status" value="1"/>
</dbReference>
<accession>Q5HNH0</accession>
<comment type="subcellular location">
    <subcellularLocation>
        <location evidence="2">Cell membrane</location>
        <topology evidence="2">Single-pass membrane protein</topology>
    </subcellularLocation>
</comment>
<comment type="similarity">
    <text evidence="2">Belongs to the UPF0478 family.</text>
</comment>
<feature type="chain" id="PRO_0000299441" description="UPF0478 protein SERP1299">
    <location>
        <begin position="1"/>
        <end position="163"/>
    </location>
</feature>
<feature type="transmembrane region" description="Helical" evidence="1">
    <location>
        <begin position="7"/>
        <end position="27"/>
    </location>
</feature>
<sequence length="163" mass="18032">MDWILPIAGIIAAIAFLILCIGIVVVLISVKKNLDYVAKTLDGVEGQVQGITRETTDLLHKVNRLTEDIQGKVDRLNSVVDAVKGIGDSVQNLNGSVDRVTNSITHNISQNEDKISQVVQWSNVAMEIADKWQNRYNRRGSANYKTNTVADDANHSYNSRVNK</sequence>
<organism>
    <name type="scientific">Staphylococcus epidermidis (strain ATCC 35984 / DSM 28319 / BCRC 17069 / CCUG 31568 / BM 3577 / RP62A)</name>
    <dbReference type="NCBI Taxonomy" id="176279"/>
    <lineage>
        <taxon>Bacteria</taxon>
        <taxon>Bacillati</taxon>
        <taxon>Bacillota</taxon>
        <taxon>Bacilli</taxon>
        <taxon>Bacillales</taxon>
        <taxon>Staphylococcaceae</taxon>
        <taxon>Staphylococcus</taxon>
    </lineage>
</organism>
<proteinExistence type="inferred from homology"/>
<protein>
    <recommendedName>
        <fullName>UPF0478 protein SERP1299</fullName>
    </recommendedName>
</protein>
<evidence type="ECO:0000255" key="1"/>
<evidence type="ECO:0000305" key="2"/>
<reference key="1">
    <citation type="journal article" date="2005" name="J. Bacteriol.">
        <title>Insights on evolution of virulence and resistance from the complete genome analysis of an early methicillin-resistant Staphylococcus aureus strain and a biofilm-producing methicillin-resistant Staphylococcus epidermidis strain.</title>
        <authorList>
            <person name="Gill S.R."/>
            <person name="Fouts D.E."/>
            <person name="Archer G.L."/>
            <person name="Mongodin E.F."/>
            <person name="DeBoy R.T."/>
            <person name="Ravel J."/>
            <person name="Paulsen I.T."/>
            <person name="Kolonay J.F."/>
            <person name="Brinkac L.M."/>
            <person name="Beanan M.J."/>
            <person name="Dodson R.J."/>
            <person name="Daugherty S.C."/>
            <person name="Madupu R."/>
            <person name="Angiuoli S.V."/>
            <person name="Durkin A.S."/>
            <person name="Haft D.H."/>
            <person name="Vamathevan J.J."/>
            <person name="Khouri H."/>
            <person name="Utterback T.R."/>
            <person name="Lee C."/>
            <person name="Dimitrov G."/>
            <person name="Jiang L."/>
            <person name="Qin H."/>
            <person name="Weidman J."/>
            <person name="Tran K."/>
            <person name="Kang K.H."/>
            <person name="Hance I.R."/>
            <person name="Nelson K.E."/>
            <person name="Fraser C.M."/>
        </authorList>
    </citation>
    <scope>NUCLEOTIDE SEQUENCE [LARGE SCALE GENOMIC DNA]</scope>
    <source>
        <strain>ATCC 35984 / DSM 28319 / BCRC 17069 / CCUG 31568 / BM 3577 / RP62A</strain>
    </source>
</reference>
<keyword id="KW-1003">Cell membrane</keyword>
<keyword id="KW-0472">Membrane</keyword>
<keyword id="KW-1185">Reference proteome</keyword>
<keyword id="KW-0812">Transmembrane</keyword>
<keyword id="KW-1133">Transmembrane helix</keyword>